<protein>
    <recommendedName>
        <fullName>Taste receptor type 2 member 1</fullName>
        <shortName>T2R1</shortName>
    </recommendedName>
</protein>
<organism>
    <name type="scientific">Pan paniscus</name>
    <name type="common">Pygmy chimpanzee</name>
    <name type="synonym">Bonobo</name>
    <dbReference type="NCBI Taxonomy" id="9597"/>
    <lineage>
        <taxon>Eukaryota</taxon>
        <taxon>Metazoa</taxon>
        <taxon>Chordata</taxon>
        <taxon>Craniata</taxon>
        <taxon>Vertebrata</taxon>
        <taxon>Euteleostomi</taxon>
        <taxon>Mammalia</taxon>
        <taxon>Eutheria</taxon>
        <taxon>Euarchontoglires</taxon>
        <taxon>Primates</taxon>
        <taxon>Haplorrhini</taxon>
        <taxon>Catarrhini</taxon>
        <taxon>Hominidae</taxon>
        <taxon>Pan</taxon>
    </lineage>
</organism>
<name>TA2R1_PANPA</name>
<keyword id="KW-0297">G-protein coupled receptor</keyword>
<keyword id="KW-0325">Glycoprotein</keyword>
<keyword id="KW-0472">Membrane</keyword>
<keyword id="KW-0675">Receptor</keyword>
<keyword id="KW-1185">Reference proteome</keyword>
<keyword id="KW-0716">Sensory transduction</keyword>
<keyword id="KW-0919">Taste</keyword>
<keyword id="KW-0807">Transducer</keyword>
<keyword id="KW-0812">Transmembrane</keyword>
<keyword id="KW-1133">Transmembrane helix</keyword>
<accession>Q646G9</accession>
<gene>
    <name type="primary">TAS2R1</name>
</gene>
<feature type="chain" id="PRO_0000082189" description="Taste receptor type 2 member 1">
    <location>
        <begin position="1"/>
        <end position="299"/>
    </location>
</feature>
<feature type="topological domain" description="Extracellular" evidence="2">
    <location>
        <begin position="1"/>
        <end position="9"/>
    </location>
</feature>
<feature type="transmembrane region" description="Helical; Name=1" evidence="2">
    <location>
        <begin position="10"/>
        <end position="30"/>
    </location>
</feature>
<feature type="topological domain" description="Cytoplasmic" evidence="2">
    <location>
        <begin position="31"/>
        <end position="55"/>
    </location>
</feature>
<feature type="transmembrane region" description="Helical; Name=2" evidence="2">
    <location>
        <begin position="56"/>
        <end position="76"/>
    </location>
</feature>
<feature type="topological domain" description="Extracellular" evidence="2">
    <location>
        <begin position="77"/>
        <end position="81"/>
    </location>
</feature>
<feature type="transmembrane region" description="Helical; Name=3" evidence="2">
    <location>
        <begin position="82"/>
        <end position="102"/>
    </location>
</feature>
<feature type="topological domain" description="Cytoplasmic" evidence="2">
    <location>
        <begin position="103"/>
        <end position="124"/>
    </location>
</feature>
<feature type="transmembrane region" description="Helical; Name=4" evidence="2">
    <location>
        <begin position="125"/>
        <end position="145"/>
    </location>
</feature>
<feature type="topological domain" description="Extracellular" evidence="2">
    <location>
        <begin position="146"/>
        <end position="178"/>
    </location>
</feature>
<feature type="transmembrane region" description="Helical; Name=5" evidence="2">
    <location>
        <begin position="179"/>
        <end position="199"/>
    </location>
</feature>
<feature type="topological domain" description="Cytoplasmic" evidence="2">
    <location>
        <begin position="200"/>
        <end position="222"/>
    </location>
</feature>
<feature type="transmembrane region" description="Helical; Name=6" evidence="2">
    <location>
        <begin position="223"/>
        <end position="243"/>
    </location>
</feature>
<feature type="topological domain" description="Extracellular" evidence="2">
    <location>
        <begin position="244"/>
        <end position="257"/>
    </location>
</feature>
<feature type="transmembrane region" description="Helical; Name=7" evidence="2">
    <location>
        <begin position="258"/>
        <end position="278"/>
    </location>
</feature>
<feature type="topological domain" description="Cytoplasmic" evidence="2">
    <location>
        <begin position="279"/>
        <end position="299"/>
    </location>
</feature>
<feature type="glycosylation site" description="N-linked (GlcNAc...) asparagine" evidence="2">
    <location>
        <position position="163"/>
    </location>
</feature>
<proteinExistence type="inferred from homology"/>
<sequence length="299" mass="34217">MLESHLIIYFLLAVIQFLLGIFTNGIIVVVNGIDLIKHRKMAPLDLLLSCLAVSRIFLQLFIFYVNVIVIFFIEFIMCSANCAILLFVNELELWLATWLGVFYCAKVASVRHPLFIWLKMRISKLVPWMILGSLLYVSMICVFHSKYAGFMVPHFLRNFFSQNATIQKEDTLAIQIFSFVAEFSVPLLIFLVAVLLLIFSLGRHTRQMRNTVAGSRVPGRGAPISALLSILSFLILYFSHCMIKVFLSSLKFHVRRFIFLFFILVIGIYPSGHSLILILGNPKLKQNAKKFLLHSKCCQ</sequence>
<dbReference type="EMBL" id="AY724811">
    <property type="protein sequence ID" value="AAU21050.1"/>
    <property type="molecule type" value="Genomic_DNA"/>
</dbReference>
<dbReference type="EMBL" id="AY677132">
    <property type="protein sequence ID" value="AAV28561.1"/>
    <property type="molecule type" value="Genomic_DNA"/>
</dbReference>
<dbReference type="RefSeq" id="XP_003809270.1">
    <property type="nucleotide sequence ID" value="XM_003809222.2"/>
</dbReference>
<dbReference type="SMR" id="Q646G9"/>
<dbReference type="STRING" id="9597.ENSPPAP00000002307"/>
<dbReference type="GlyCosmos" id="Q646G9">
    <property type="glycosylation" value="1 site, No reported glycans"/>
</dbReference>
<dbReference type="Ensembl" id="ENSPPAT00000011288.1">
    <property type="protein sequence ID" value="ENSPPAP00000002307.1"/>
    <property type="gene ID" value="ENSPPAG00000010439.1"/>
</dbReference>
<dbReference type="GeneID" id="100989412"/>
<dbReference type="KEGG" id="pps:100989412"/>
<dbReference type="CTD" id="50834"/>
<dbReference type="eggNOG" id="ENOG502S2SI">
    <property type="taxonomic scope" value="Eukaryota"/>
</dbReference>
<dbReference type="GeneTree" id="ENSGT01100000263477"/>
<dbReference type="OMA" id="KQRKMIP"/>
<dbReference type="Proteomes" id="UP000240080">
    <property type="component" value="Chromosome 5"/>
</dbReference>
<dbReference type="GO" id="GO:0005886">
    <property type="term" value="C:plasma membrane"/>
    <property type="evidence" value="ECO:0007669"/>
    <property type="project" value="UniProtKB-ARBA"/>
</dbReference>
<dbReference type="GO" id="GO:0033038">
    <property type="term" value="F:bitter taste receptor activity"/>
    <property type="evidence" value="ECO:0007669"/>
    <property type="project" value="Ensembl"/>
</dbReference>
<dbReference type="GO" id="GO:0004930">
    <property type="term" value="F:G protein-coupled receptor activity"/>
    <property type="evidence" value="ECO:0007669"/>
    <property type="project" value="UniProtKB-KW"/>
</dbReference>
<dbReference type="CDD" id="cd15016">
    <property type="entry name" value="7tm_TAS2R1"/>
    <property type="match status" value="1"/>
</dbReference>
<dbReference type="FunFam" id="1.20.1070.10:FF:000055">
    <property type="entry name" value="Taste receptor type 2"/>
    <property type="match status" value="1"/>
</dbReference>
<dbReference type="Gene3D" id="1.20.1070.10">
    <property type="entry name" value="Rhodopsin 7-helix transmembrane proteins"/>
    <property type="match status" value="1"/>
</dbReference>
<dbReference type="InterPro" id="IPR007960">
    <property type="entry name" value="TAS2R"/>
</dbReference>
<dbReference type="PANTHER" id="PTHR11394">
    <property type="entry name" value="TASTE RECEPTOR TYPE 2"/>
    <property type="match status" value="1"/>
</dbReference>
<dbReference type="PANTHER" id="PTHR11394:SF149">
    <property type="entry name" value="TASTE RECEPTOR TYPE 2 MEMBER 1"/>
    <property type="match status" value="1"/>
</dbReference>
<dbReference type="Pfam" id="PF05296">
    <property type="entry name" value="TAS2R"/>
    <property type="match status" value="1"/>
</dbReference>
<dbReference type="SUPFAM" id="SSF81321">
    <property type="entry name" value="Family A G protein-coupled receptor-like"/>
    <property type="match status" value="1"/>
</dbReference>
<comment type="function">
    <text evidence="1">Receptor that may play a role in the perception of bitterness and is gustducin-linked. May play a role in sensing the chemical composition of the gastrointestinal content. The activity of this receptor may stimulate alpha gustducin, mediate PLC-beta-2 activation and lead to the gating of TRPM5 (By similarity).</text>
</comment>
<comment type="subcellular location">
    <subcellularLocation>
        <location>Membrane</location>
        <topology>Multi-pass membrane protein</topology>
    </subcellularLocation>
</comment>
<comment type="miscellaneous">
    <text>Most taste cells may be activated by a limited number of bitter compounds; individual taste cells can discriminate among bitter stimuli.</text>
</comment>
<comment type="similarity">
    <text evidence="3">Belongs to the G-protein coupled receptor T2R family.</text>
</comment>
<evidence type="ECO:0000250" key="1"/>
<evidence type="ECO:0000255" key="2"/>
<evidence type="ECO:0000305" key="3"/>
<reference key="1">
    <citation type="journal article" date="2005" name="Mol. Biol. Evol.">
        <title>Evolution of bitter taste receptors in humans and apes.</title>
        <authorList>
            <person name="Fischer A."/>
            <person name="Gilad Y."/>
            <person name="Man O."/>
            <person name="Paeaebo S."/>
        </authorList>
    </citation>
    <scope>NUCLEOTIDE SEQUENCE [GENOMIC DNA]</scope>
</reference>
<reference key="2">
    <citation type="journal article" date="2004" name="Proc. Natl. Acad. Sci. U.S.A.">
        <title>Divergence of T2R chemosensory receptor families in humans, bonobos, and chimpanzees.</title>
        <authorList>
            <person name="Parry C.M."/>
            <person name="Erkner A."/>
            <person name="le Coutre J."/>
        </authorList>
    </citation>
    <scope>NUCLEOTIDE SEQUENCE [GENOMIC DNA]</scope>
</reference>